<proteinExistence type="inferred from homology"/>
<accession>B5YKD5</accession>
<reference key="1">
    <citation type="submission" date="2008-08" db="EMBL/GenBank/DDBJ databases">
        <title>The complete genome sequence of Thermodesulfovibrio yellowstonii strain ATCC 51303 / DSM 11347 / YP87.</title>
        <authorList>
            <person name="Dodson R.J."/>
            <person name="Durkin A.S."/>
            <person name="Wu M."/>
            <person name="Eisen J."/>
            <person name="Sutton G."/>
        </authorList>
    </citation>
    <scope>NUCLEOTIDE SEQUENCE [LARGE SCALE GENOMIC DNA]</scope>
    <source>
        <strain>ATCC 51303 / DSM 11347 / YP87</strain>
    </source>
</reference>
<evidence type="ECO:0000255" key="1">
    <source>
        <dbReference type="HAMAP-Rule" id="MF_00012"/>
    </source>
</evidence>
<keyword id="KW-0001">2Fe-2S</keyword>
<keyword id="KW-0028">Amino-acid biosynthesis</keyword>
<keyword id="KW-0100">Branched-chain amino acid biosynthesis</keyword>
<keyword id="KW-0408">Iron</keyword>
<keyword id="KW-0411">Iron-sulfur</keyword>
<keyword id="KW-0456">Lyase</keyword>
<keyword id="KW-0460">Magnesium</keyword>
<keyword id="KW-0479">Metal-binding</keyword>
<keyword id="KW-1185">Reference proteome</keyword>
<feature type="chain" id="PRO_1000089425" description="Dihydroxy-acid dehydratase">
    <location>
        <begin position="1"/>
        <end position="550"/>
    </location>
</feature>
<feature type="active site" description="Proton acceptor" evidence="1">
    <location>
        <position position="466"/>
    </location>
</feature>
<feature type="binding site" evidence="1">
    <location>
        <position position="78"/>
    </location>
    <ligand>
        <name>Mg(2+)</name>
        <dbReference type="ChEBI" id="CHEBI:18420"/>
    </ligand>
</feature>
<feature type="binding site" evidence="1">
    <location>
        <position position="119"/>
    </location>
    <ligand>
        <name>[2Fe-2S] cluster</name>
        <dbReference type="ChEBI" id="CHEBI:190135"/>
    </ligand>
</feature>
<feature type="binding site" evidence="1">
    <location>
        <position position="120"/>
    </location>
    <ligand>
        <name>Mg(2+)</name>
        <dbReference type="ChEBI" id="CHEBI:18420"/>
    </ligand>
</feature>
<feature type="binding site" description="via carbamate group" evidence="1">
    <location>
        <position position="121"/>
    </location>
    <ligand>
        <name>Mg(2+)</name>
        <dbReference type="ChEBI" id="CHEBI:18420"/>
    </ligand>
</feature>
<feature type="binding site" evidence="1">
    <location>
        <position position="192"/>
    </location>
    <ligand>
        <name>[2Fe-2S] cluster</name>
        <dbReference type="ChEBI" id="CHEBI:190135"/>
    </ligand>
</feature>
<feature type="binding site" evidence="1">
    <location>
        <position position="440"/>
    </location>
    <ligand>
        <name>Mg(2+)</name>
        <dbReference type="ChEBI" id="CHEBI:18420"/>
    </ligand>
</feature>
<feature type="modified residue" description="N6-carboxylysine" evidence="1">
    <location>
        <position position="121"/>
    </location>
</feature>
<gene>
    <name evidence="1" type="primary">ilvD</name>
    <name type="ordered locus">THEYE_A0862</name>
</gene>
<protein>
    <recommendedName>
        <fullName evidence="1">Dihydroxy-acid dehydratase</fullName>
        <shortName evidence="1">DAD</shortName>
        <ecNumber evidence="1">4.2.1.9</ecNumber>
    </recommendedName>
</protein>
<organism>
    <name type="scientific">Thermodesulfovibrio yellowstonii (strain ATCC 51303 / DSM 11347 / YP87)</name>
    <dbReference type="NCBI Taxonomy" id="289376"/>
    <lineage>
        <taxon>Bacteria</taxon>
        <taxon>Pseudomonadati</taxon>
        <taxon>Nitrospirota</taxon>
        <taxon>Thermodesulfovibrionia</taxon>
        <taxon>Thermodesulfovibrionales</taxon>
        <taxon>Thermodesulfovibrionaceae</taxon>
        <taxon>Thermodesulfovibrio</taxon>
    </lineage>
</organism>
<sequence length="550" mass="59456">MRSDSIKKGLERTPHRALLFATGIPKSEMNKPFIGVATSFTDIIPGHISMKELERFIEKGIHTGGGYPFFFGIPGICDGIAMGHKGMKYSLPSRELIADIIECIVEAHQFDGIVLLTNCDKITPGMLMAAARLDIPAIVLTAGPMLAGYYKGQRRNLTSDTFEAIGKFKKGVLTEKDLEALELCACPGAGSCQGMYTANTMACVTEALGMSLPGTAATPAVMSEKRRLAFETGVKIVELVRKKINARQILTKEAFYNAIAVDMALGGSTNTVLHIKAIANEAGINLPLEVFDEISRKTPHLVNIIPSGEHYMEDLYKAGGIPAVLKRLKDKIYSNPTVSGIDIKEIAQKAEIYDENVIRSIKKAYHKEGGVAILKGNLAPDGAVVKQTAVSSKMLKFEGIARCFDSEENAMKAILDGKIKEGDVIIIRYEGPSGGPGMREMLSPTSAITGMGLNESVALITDGRFSGGTRGPCIGHVSPEAARGGPIAIVKDGDKILIDIPKRKIEILISESEIKKRLKNWKPPKQKIEKGYLLRYARNVSSADKGAILE</sequence>
<dbReference type="EC" id="4.2.1.9" evidence="1"/>
<dbReference type="EMBL" id="CP001147">
    <property type="protein sequence ID" value="ACI21946.1"/>
    <property type="molecule type" value="Genomic_DNA"/>
</dbReference>
<dbReference type="RefSeq" id="WP_012546643.1">
    <property type="nucleotide sequence ID" value="NC_011296.1"/>
</dbReference>
<dbReference type="RefSeq" id="YP_002248700.1">
    <property type="nucleotide sequence ID" value="NC_011296.1"/>
</dbReference>
<dbReference type="SMR" id="B5YKD5"/>
<dbReference type="FunCoup" id="B5YKD5">
    <property type="interactions" value="402"/>
</dbReference>
<dbReference type="STRING" id="289376.THEYE_A0862"/>
<dbReference type="EnsemblBacteria" id="ACI21946">
    <property type="protein sequence ID" value="ACI21946"/>
    <property type="gene ID" value="THEYE_A0862"/>
</dbReference>
<dbReference type="KEGG" id="tye:THEYE_A0862"/>
<dbReference type="PATRIC" id="fig|289376.4.peg.849"/>
<dbReference type="eggNOG" id="COG0129">
    <property type="taxonomic scope" value="Bacteria"/>
</dbReference>
<dbReference type="HOGENOM" id="CLU_014271_4_2_0"/>
<dbReference type="InParanoid" id="B5YKD5"/>
<dbReference type="OrthoDB" id="9807077at2"/>
<dbReference type="UniPathway" id="UPA00047">
    <property type="reaction ID" value="UER00057"/>
</dbReference>
<dbReference type="UniPathway" id="UPA00049">
    <property type="reaction ID" value="UER00061"/>
</dbReference>
<dbReference type="Proteomes" id="UP000000718">
    <property type="component" value="Chromosome"/>
</dbReference>
<dbReference type="GO" id="GO:0005829">
    <property type="term" value="C:cytosol"/>
    <property type="evidence" value="ECO:0000318"/>
    <property type="project" value="GO_Central"/>
</dbReference>
<dbReference type="GO" id="GO:0051537">
    <property type="term" value="F:2 iron, 2 sulfur cluster binding"/>
    <property type="evidence" value="ECO:0007669"/>
    <property type="project" value="UniProtKB-UniRule"/>
</dbReference>
<dbReference type="GO" id="GO:0004160">
    <property type="term" value="F:dihydroxy-acid dehydratase activity"/>
    <property type="evidence" value="ECO:0007669"/>
    <property type="project" value="UniProtKB-UniRule"/>
</dbReference>
<dbReference type="GO" id="GO:0016836">
    <property type="term" value="F:hydro-lyase activity"/>
    <property type="evidence" value="ECO:0000318"/>
    <property type="project" value="GO_Central"/>
</dbReference>
<dbReference type="GO" id="GO:0000287">
    <property type="term" value="F:magnesium ion binding"/>
    <property type="evidence" value="ECO:0007669"/>
    <property type="project" value="UniProtKB-UniRule"/>
</dbReference>
<dbReference type="GO" id="GO:0009097">
    <property type="term" value="P:isoleucine biosynthetic process"/>
    <property type="evidence" value="ECO:0007669"/>
    <property type="project" value="UniProtKB-UniRule"/>
</dbReference>
<dbReference type="GO" id="GO:0009099">
    <property type="term" value="P:L-valine biosynthetic process"/>
    <property type="evidence" value="ECO:0007669"/>
    <property type="project" value="UniProtKB-UniRule"/>
</dbReference>
<dbReference type="FunFam" id="3.50.30.80:FF:000001">
    <property type="entry name" value="Dihydroxy-acid dehydratase"/>
    <property type="match status" value="1"/>
</dbReference>
<dbReference type="Gene3D" id="3.50.30.80">
    <property type="entry name" value="IlvD/EDD C-terminal domain-like"/>
    <property type="match status" value="1"/>
</dbReference>
<dbReference type="HAMAP" id="MF_00012">
    <property type="entry name" value="IlvD"/>
    <property type="match status" value="1"/>
</dbReference>
<dbReference type="InterPro" id="IPR042096">
    <property type="entry name" value="Dihydro-acid_dehy_C"/>
</dbReference>
<dbReference type="InterPro" id="IPR004404">
    <property type="entry name" value="DihydroxyA_deHydtase"/>
</dbReference>
<dbReference type="InterPro" id="IPR020558">
    <property type="entry name" value="DiOHA_6PGluconate_deHydtase_CS"/>
</dbReference>
<dbReference type="InterPro" id="IPR056740">
    <property type="entry name" value="ILV_EDD_C"/>
</dbReference>
<dbReference type="InterPro" id="IPR000581">
    <property type="entry name" value="ILV_EDD_N"/>
</dbReference>
<dbReference type="InterPro" id="IPR037237">
    <property type="entry name" value="IlvD/EDD_N"/>
</dbReference>
<dbReference type="NCBIfam" id="TIGR00110">
    <property type="entry name" value="ilvD"/>
    <property type="match status" value="1"/>
</dbReference>
<dbReference type="NCBIfam" id="NF002068">
    <property type="entry name" value="PRK00911.1"/>
    <property type="match status" value="1"/>
</dbReference>
<dbReference type="PANTHER" id="PTHR43661">
    <property type="entry name" value="D-XYLONATE DEHYDRATASE"/>
    <property type="match status" value="1"/>
</dbReference>
<dbReference type="PANTHER" id="PTHR43661:SF3">
    <property type="entry name" value="D-XYLONATE DEHYDRATASE YAGF-RELATED"/>
    <property type="match status" value="1"/>
</dbReference>
<dbReference type="Pfam" id="PF24877">
    <property type="entry name" value="ILV_EDD_C"/>
    <property type="match status" value="1"/>
</dbReference>
<dbReference type="Pfam" id="PF00920">
    <property type="entry name" value="ILVD_EDD_N"/>
    <property type="match status" value="1"/>
</dbReference>
<dbReference type="SUPFAM" id="SSF143975">
    <property type="entry name" value="IlvD/EDD N-terminal domain-like"/>
    <property type="match status" value="1"/>
</dbReference>
<dbReference type="SUPFAM" id="SSF52016">
    <property type="entry name" value="LeuD/IlvD-like"/>
    <property type="match status" value="1"/>
</dbReference>
<dbReference type="PROSITE" id="PS00886">
    <property type="entry name" value="ILVD_EDD_1"/>
    <property type="match status" value="1"/>
</dbReference>
<dbReference type="PROSITE" id="PS00887">
    <property type="entry name" value="ILVD_EDD_2"/>
    <property type="match status" value="1"/>
</dbReference>
<name>ILVD_THEYD</name>
<comment type="function">
    <text evidence="1">Functions in the biosynthesis of branched-chain amino acids. Catalyzes the dehydration of (2R,3R)-2,3-dihydroxy-3-methylpentanoate (2,3-dihydroxy-3-methylvalerate) into 2-oxo-3-methylpentanoate (2-oxo-3-methylvalerate) and of (2R)-2,3-dihydroxy-3-methylbutanoate (2,3-dihydroxyisovalerate) into 2-oxo-3-methylbutanoate (2-oxoisovalerate), the penultimate precursor to L-isoleucine and L-valine, respectively.</text>
</comment>
<comment type="catalytic activity">
    <reaction evidence="1">
        <text>(2R)-2,3-dihydroxy-3-methylbutanoate = 3-methyl-2-oxobutanoate + H2O</text>
        <dbReference type="Rhea" id="RHEA:24809"/>
        <dbReference type="ChEBI" id="CHEBI:11851"/>
        <dbReference type="ChEBI" id="CHEBI:15377"/>
        <dbReference type="ChEBI" id="CHEBI:49072"/>
        <dbReference type="EC" id="4.2.1.9"/>
    </reaction>
    <physiologicalReaction direction="left-to-right" evidence="1">
        <dbReference type="Rhea" id="RHEA:24810"/>
    </physiologicalReaction>
</comment>
<comment type="catalytic activity">
    <reaction evidence="1">
        <text>(2R,3R)-2,3-dihydroxy-3-methylpentanoate = (S)-3-methyl-2-oxopentanoate + H2O</text>
        <dbReference type="Rhea" id="RHEA:27694"/>
        <dbReference type="ChEBI" id="CHEBI:15377"/>
        <dbReference type="ChEBI" id="CHEBI:35146"/>
        <dbReference type="ChEBI" id="CHEBI:49258"/>
        <dbReference type="EC" id="4.2.1.9"/>
    </reaction>
    <physiologicalReaction direction="left-to-right" evidence="1">
        <dbReference type="Rhea" id="RHEA:27695"/>
    </physiologicalReaction>
</comment>
<comment type="cofactor">
    <cofactor evidence="1">
        <name>[2Fe-2S] cluster</name>
        <dbReference type="ChEBI" id="CHEBI:190135"/>
    </cofactor>
    <text evidence="1">Binds 1 [2Fe-2S] cluster per subunit. This cluster acts as a Lewis acid cofactor.</text>
</comment>
<comment type="cofactor">
    <cofactor evidence="1">
        <name>Mg(2+)</name>
        <dbReference type="ChEBI" id="CHEBI:18420"/>
    </cofactor>
</comment>
<comment type="pathway">
    <text evidence="1">Amino-acid biosynthesis; L-isoleucine biosynthesis; L-isoleucine from 2-oxobutanoate: step 3/4.</text>
</comment>
<comment type="pathway">
    <text evidence="1">Amino-acid biosynthesis; L-valine biosynthesis; L-valine from pyruvate: step 3/4.</text>
</comment>
<comment type="subunit">
    <text evidence="1">Homodimer.</text>
</comment>
<comment type="similarity">
    <text evidence="1">Belongs to the IlvD/Edd family.</text>
</comment>